<gene>
    <name evidence="9" type="primary">Pnpla3</name>
    <name type="synonym">Adpn</name>
</gene>
<name>PLPL3_MOUSE</name>
<reference key="1">
    <citation type="journal article" date="2001" name="J. Biol. Chem.">
        <title>Adiponutrin, a transmembrane protein corresponding to a novel dietary- and obesity-linked mRNA specifically expressed in the adipose lineage.</title>
        <authorList>
            <person name="Baulande S."/>
            <person name="Lasnier F."/>
            <person name="Lucas M."/>
            <person name="Pairault J."/>
        </authorList>
    </citation>
    <scope>NUCLEOTIDE SEQUENCE [MRNA]</scope>
    <scope>TISSUE SPECIFICITY</scope>
    <scope>SUBCELLULAR LOCATION</scope>
    <source>
        <strain>SWR/J</strain>
        <tissue>Adipose tissue</tissue>
    </source>
</reference>
<reference key="2">
    <citation type="journal article" date="2004" name="Genome Res.">
        <title>The status, quality, and expansion of the NIH full-length cDNA project: the Mammalian Gene Collection (MGC).</title>
        <authorList>
            <consortium name="The MGC Project Team"/>
        </authorList>
    </citation>
    <scope>NUCLEOTIDE SEQUENCE [LARGE SCALE MRNA]</scope>
    <source>
        <tissue>Mammary gland</tissue>
    </source>
</reference>
<reference key="3">
    <citation type="journal article" date="2010" name="Cell">
        <title>A tissue-specific atlas of mouse protein phosphorylation and expression.</title>
        <authorList>
            <person name="Huttlin E.L."/>
            <person name="Jedrychowski M.P."/>
            <person name="Elias J.E."/>
            <person name="Goswami T."/>
            <person name="Rad R."/>
            <person name="Beausoleil S.A."/>
            <person name="Villen J."/>
            <person name="Haas W."/>
            <person name="Sowa M.E."/>
            <person name="Gygi S.P."/>
        </authorList>
    </citation>
    <scope>IDENTIFICATION BY MASS SPECTROMETRY [LARGE SCALE ANALYSIS]</scope>
    <source>
        <tissue>Brown adipose tissue</tissue>
    </source>
</reference>
<reference key="4">
    <citation type="journal article" date="2012" name="Cell Metab.">
        <title>Adiponutrin functions as a nutritionally regulated lysophosphatidic acid acyltransferase.</title>
        <authorList>
            <person name="Kumari M."/>
            <person name="Schoiswohl G."/>
            <person name="Chitraju C."/>
            <person name="Paar M."/>
            <person name="Cornaciu I."/>
            <person name="Rangrez A.Y."/>
            <person name="Wongsiriroj N."/>
            <person name="Nagy H.M."/>
            <person name="Ivanova P.T."/>
            <person name="Scott S.A."/>
            <person name="Knittelfelder O."/>
            <person name="Rechberger G.N."/>
            <person name="Birner-Gruenberger R."/>
            <person name="Eder S."/>
            <person name="Brown H.A."/>
            <person name="Haemmerle G."/>
            <person name="Oberer M."/>
            <person name="Lass A."/>
            <person name="Kershaw E.E."/>
            <person name="Zimmermann R."/>
            <person name="Zechner R."/>
        </authorList>
    </citation>
    <scope>CATALYTIC ACTIVITY</scope>
    <scope>FUNCTION</scope>
    <scope>PATHWAY</scope>
    <scope>INDUCTION BY HIGH-SUCROSE DIET</scope>
    <scope>SUBCELLULAR LOCATION</scope>
    <scope>BIOPHYSICOCHEMICAL PROPERTIES</scope>
    <scope>MUTAGENESIS OF ILE-148</scope>
    <scope>TISSUE SPECIFICITY</scope>
</reference>
<proteinExistence type="evidence at protein level"/>
<accession>Q91WW7</accession>
<feature type="chain" id="PRO_0000064459" description="1-acylglycerol-3-phosphate O-acyltransferase Pnpla3">
    <location>
        <begin position="1"/>
        <end position="413"/>
    </location>
</feature>
<feature type="topological domain" description="Cytoplasmic" evidence="2">
    <location>
        <begin position="1"/>
        <end position="42"/>
    </location>
</feature>
<feature type="transmembrane region" description="Helical; Signal-anchor for type II membrane protein" evidence="2">
    <location>
        <begin position="43"/>
        <end position="63"/>
    </location>
</feature>
<feature type="topological domain" description="Lumenal" evidence="2">
    <location>
        <begin position="64"/>
        <end position="413"/>
    </location>
</feature>
<feature type="domain" description="PNPLA" evidence="3">
    <location>
        <begin position="10"/>
        <end position="179"/>
    </location>
</feature>
<feature type="region of interest" description="Disordered" evidence="4">
    <location>
        <begin position="389"/>
        <end position="413"/>
    </location>
</feature>
<feature type="short sequence motif" description="GXGXXG" evidence="3">
    <location>
        <begin position="14"/>
        <end position="19"/>
    </location>
</feature>
<feature type="short sequence motif" description="GXSXG" evidence="3">
    <location>
        <begin position="45"/>
        <end position="49"/>
    </location>
</feature>
<feature type="short sequence motif" description="DGA/G" evidence="3">
    <location>
        <begin position="166"/>
        <end position="168"/>
    </location>
</feature>
<feature type="compositionally biased region" description="Basic residues" evidence="4">
    <location>
        <begin position="394"/>
        <end position="403"/>
    </location>
</feature>
<feature type="active site" description="Nucleophile" evidence="3">
    <location>
        <position position="47"/>
    </location>
</feature>
<feature type="active site" description="Proton acceptor" evidence="3">
    <location>
        <position position="166"/>
    </location>
</feature>
<feature type="glycosylation site" description="N-linked (GlcNAc...) asparagine" evidence="2">
    <location>
        <position position="206"/>
    </location>
</feature>
<feature type="glycosylation site" description="N-linked (GlcNAc...) asparagine" evidence="2">
    <location>
        <position position="209"/>
    </location>
</feature>
<feature type="mutagenesis site" description="Increases 1-acylglycerol-3-phosphate O-acyltransferase activity 2-fold; promotes hepatic lipid synthesis." evidence="6">
    <original>I</original>
    <variation>M</variation>
    <location>
        <position position="148"/>
    </location>
</feature>
<evidence type="ECO:0000250" key="1">
    <source>
        <dbReference type="UniProtKB" id="Q9NST1"/>
    </source>
</evidence>
<evidence type="ECO:0000255" key="2"/>
<evidence type="ECO:0000255" key="3">
    <source>
        <dbReference type="PROSITE-ProRule" id="PRU01161"/>
    </source>
</evidence>
<evidence type="ECO:0000256" key="4">
    <source>
        <dbReference type="SAM" id="MobiDB-lite"/>
    </source>
</evidence>
<evidence type="ECO:0000269" key="5">
    <source>
    </source>
</evidence>
<evidence type="ECO:0000269" key="6">
    <source>
    </source>
</evidence>
<evidence type="ECO:0000303" key="7">
    <source>
    </source>
</evidence>
<evidence type="ECO:0000305" key="8">
    <source>
    </source>
</evidence>
<evidence type="ECO:0000312" key="9">
    <source>
        <dbReference type="MGI" id="MGI:2151796"/>
    </source>
</evidence>
<protein>
    <recommendedName>
        <fullName evidence="8">1-acylglycerol-3-phosphate O-acyltransferase Pnpla3</fullName>
        <ecNumber evidence="6">2.3.1.51</ecNumber>
    </recommendedName>
    <alternativeName>
        <fullName evidence="1">Acylglycerol transacylase</fullName>
    </alternativeName>
    <alternativeName>
        <fullName evidence="7">Adiponutrin</fullName>
        <shortName evidence="7">ADPN</shortName>
    </alternativeName>
    <alternativeName>
        <fullName evidence="1">Calcium-independent phospholipase A2-epsilon</fullName>
        <shortName evidence="1">iPLA2-epsilon</shortName>
        <ecNumber evidence="1">3.1.1.4</ecNumber>
    </alternativeName>
    <alternativeName>
        <fullName evidence="7">Lysophosphatidic acid acyltransferase</fullName>
    </alternativeName>
    <alternativeName>
        <fullName evidence="1">Patatin-like phospholipase domain-containing protein 3</fullName>
        <ecNumber evidence="6">3.1.1.3</ecNumber>
    </alternativeName>
</protein>
<sequence length="413" mass="45772">MYDPERRWSLSFAGCGFLGFYHVGATLCLSERAPHLLRDARTFFGCSAGALHAVTFVCSLPLGRIMEILMDLVRKARSRNIGTLHPFFNINKCIRDGLQESLPDNVHQVISGKVHISLTRVSDGENVLVSEFHSKDEVVDALVCSCFIPLFSGLIPPSFRGERYVDGGVSDNVPVLDAKTTITVSPFYGEHDICPKVKSTNFFHVNITNLSLRLCTGNLQLLTRALFPSDVKVMGELCYQGYLDAFRFLEENGICNGPQRSLSLSLVAPEACLENGKLVGDKVPVSLCFTDENIWETLSPELSTALSEAIKDREGYLSKVCNLLPVRILSYIMLPCSLPVESAIAAVHRLVTWLPDIQDDIQWLQWATSQVCARMTMCLLPSTRSRASKDDHRMLKHGHHPSPHKPQGNSAGL</sequence>
<comment type="function">
    <text evidence="1 6">Specifically catalyzes coenzyme A (CoA)-dependent acylation of 1-acyl-sn-glycerol 3-phosphate (2-lysophosphatidic acid/LPA) to generate phosphatidic acid (PA), an important metabolic intermediate and precursor for both triglycerides and glycerophospholipids. Does not esterify other lysophospholipids. Acyl donors are long chain (at least C16) fatty acyl-CoAs: arachidonoyl-CoA, linoleoyl-CoA, oleoyl-CoA and at a lesser extent palmitoyl-CoA (PubMed:22560221). Additionally possesses low triacylglycerol lipase and CoA-independent acylglycerol transacylase activities and thus may play a role in acyl-chain remodeling of triglycerides (By similarity). In vitro may express hydrolytic activity against glycerolipids triacylglycerol, diacylglycerol and monoacylglycerol, with a strong preference for oleic acid as the acyl moiety (By similarity). However, the triacylglycerol hydrolase activity is controversial and may be very low (PubMed:22560221). Possesses phospholipase A2 activity (By similarity).</text>
</comment>
<comment type="catalytic activity">
    <reaction evidence="6">
        <text>a 1-acyl-sn-glycero-3-phosphate + an acyl-CoA = a 1,2-diacyl-sn-glycero-3-phosphate + CoA</text>
        <dbReference type="Rhea" id="RHEA:19709"/>
        <dbReference type="ChEBI" id="CHEBI:57287"/>
        <dbReference type="ChEBI" id="CHEBI:57970"/>
        <dbReference type="ChEBI" id="CHEBI:58342"/>
        <dbReference type="ChEBI" id="CHEBI:58608"/>
        <dbReference type="EC" id="2.3.1.51"/>
    </reaction>
</comment>
<comment type="catalytic activity">
    <reaction evidence="6">
        <text>a triacylglycerol + H2O = a diacylglycerol + a fatty acid + H(+)</text>
        <dbReference type="Rhea" id="RHEA:12044"/>
        <dbReference type="ChEBI" id="CHEBI:15377"/>
        <dbReference type="ChEBI" id="CHEBI:15378"/>
        <dbReference type="ChEBI" id="CHEBI:17855"/>
        <dbReference type="ChEBI" id="CHEBI:18035"/>
        <dbReference type="ChEBI" id="CHEBI:28868"/>
        <dbReference type="EC" id="3.1.1.3"/>
    </reaction>
</comment>
<comment type="catalytic activity">
    <reaction evidence="1">
        <text>a 1-acylglycerol + a 1,3-diacylglycerol = a triacylglycerol + glycerol</text>
        <dbReference type="Rhea" id="RHEA:44440"/>
        <dbReference type="ChEBI" id="CHEBI:17754"/>
        <dbReference type="ChEBI" id="CHEBI:17855"/>
        <dbReference type="ChEBI" id="CHEBI:35759"/>
        <dbReference type="ChEBI" id="CHEBI:47777"/>
    </reaction>
</comment>
<comment type="catalytic activity">
    <reaction evidence="1">
        <text>a 1-acylglycerol + a 1,2-diacylglycerol = a triacylglycerol + glycerol</text>
        <dbReference type="Rhea" id="RHEA:44436"/>
        <dbReference type="ChEBI" id="CHEBI:17754"/>
        <dbReference type="ChEBI" id="CHEBI:17855"/>
        <dbReference type="ChEBI" id="CHEBI:35759"/>
        <dbReference type="ChEBI" id="CHEBI:49172"/>
    </reaction>
</comment>
<comment type="catalytic activity">
    <reaction evidence="1">
        <text>2 a 1-acylglycerol = a 1,2-diacylglycerol + glycerol</text>
        <dbReference type="Rhea" id="RHEA:44432"/>
        <dbReference type="ChEBI" id="CHEBI:17754"/>
        <dbReference type="ChEBI" id="CHEBI:35759"/>
        <dbReference type="ChEBI" id="CHEBI:49172"/>
    </reaction>
</comment>
<comment type="catalytic activity">
    <reaction evidence="6">
        <text>1-(9Z-octadecenoyl)-sn-glycero-3-phosphate + (9Z)-octadecenoyl-CoA = 1,2-di-(9Z-octadecenoyl)-sn-glycero-3-phosphate + CoA</text>
        <dbReference type="Rhea" id="RHEA:37131"/>
        <dbReference type="ChEBI" id="CHEBI:57287"/>
        <dbReference type="ChEBI" id="CHEBI:57387"/>
        <dbReference type="ChEBI" id="CHEBI:74544"/>
        <dbReference type="ChEBI" id="CHEBI:74546"/>
    </reaction>
    <physiologicalReaction direction="left-to-right" evidence="8">
        <dbReference type="Rhea" id="RHEA:37132"/>
    </physiologicalReaction>
</comment>
<comment type="catalytic activity">
    <reaction evidence="6">
        <text>1-(9Z-octadecenoyl)-sn-glycero-3-phosphate + hexadecanoyl-CoA = 1-(9Z)-octadecenoyl-2-hexadecanoyl-sn-glycero-3-phosphate + CoA</text>
        <dbReference type="Rhea" id="RHEA:37143"/>
        <dbReference type="ChEBI" id="CHEBI:57287"/>
        <dbReference type="ChEBI" id="CHEBI:57379"/>
        <dbReference type="ChEBI" id="CHEBI:74544"/>
        <dbReference type="ChEBI" id="CHEBI:74551"/>
    </reaction>
    <physiologicalReaction direction="left-to-right" evidence="8">
        <dbReference type="Rhea" id="RHEA:37144"/>
    </physiologicalReaction>
</comment>
<comment type="catalytic activity">
    <reaction evidence="6">
        <text>1-(9Z-octadecenoyl)-sn-glycero-3-phosphate + (9Z,12Z)-octadecadienoyl-CoA = 1-(9Z)-octadecenoyl-2-(9Z,12Z)-octadecadienoyl-sn-glycero-3-phosphate + CoA</text>
        <dbReference type="Rhea" id="RHEA:37159"/>
        <dbReference type="ChEBI" id="CHEBI:57287"/>
        <dbReference type="ChEBI" id="CHEBI:57383"/>
        <dbReference type="ChEBI" id="CHEBI:74544"/>
        <dbReference type="ChEBI" id="CHEBI:74563"/>
    </reaction>
    <physiologicalReaction direction="left-to-right" evidence="8">
        <dbReference type="Rhea" id="RHEA:37160"/>
    </physiologicalReaction>
</comment>
<comment type="catalytic activity">
    <reaction evidence="6">
        <text>1-(9Z-octadecenoyl)-sn-glycero-3-phosphate + (5Z,8Z,11Z,14Z)-eicosatetraenoyl-CoA = 1-(9Z)-octadecenoyl-2-(5Z,8Z,11Z,14Z)-eicosatetraenoyl-sn-glycero-3-phosphate + CoA</text>
        <dbReference type="Rhea" id="RHEA:37443"/>
        <dbReference type="ChEBI" id="CHEBI:57287"/>
        <dbReference type="ChEBI" id="CHEBI:57368"/>
        <dbReference type="ChEBI" id="CHEBI:74544"/>
        <dbReference type="ChEBI" id="CHEBI:74928"/>
    </reaction>
    <physiologicalReaction direction="left-to-right" evidence="8">
        <dbReference type="Rhea" id="RHEA:37444"/>
    </physiologicalReaction>
</comment>
<comment type="catalytic activity">
    <reaction evidence="1">
        <text>2 1-(9Z-octadecenoyl)-glycerol = 1,2-di-(9Z-octadecenoyl)-glycerol + glycerol</text>
        <dbReference type="Rhea" id="RHEA:38323"/>
        <dbReference type="ChEBI" id="CHEBI:17754"/>
        <dbReference type="ChEBI" id="CHEBI:52323"/>
        <dbReference type="ChEBI" id="CHEBI:75342"/>
    </reaction>
    <physiologicalReaction direction="left-to-right" evidence="1">
        <dbReference type="Rhea" id="RHEA:38324"/>
    </physiologicalReaction>
</comment>
<comment type="catalytic activity">
    <reaction evidence="1">
        <text>1-(9Z-octadecenoyl)-glycerol + 1,2-di-(9Z-octadecenoyl)-glycerol = 1,2,3-tri-(9Z-octadecenoyl)-glycerol + glycerol</text>
        <dbReference type="Rhea" id="RHEA:38327"/>
        <dbReference type="ChEBI" id="CHEBI:17754"/>
        <dbReference type="ChEBI" id="CHEBI:52323"/>
        <dbReference type="ChEBI" id="CHEBI:53753"/>
        <dbReference type="ChEBI" id="CHEBI:75342"/>
    </reaction>
    <physiologicalReaction direction="left-to-right" evidence="1">
        <dbReference type="Rhea" id="RHEA:38328"/>
    </physiologicalReaction>
</comment>
<comment type="catalytic activity">
    <reaction evidence="1">
        <text>1-(9Z-octadecenoyl)-glycerol + 1,3-di-(9Z-octadecenoyl)-glycerol = 1,2,3-tri-(9Z-octadecenoyl)-glycerol + glycerol</text>
        <dbReference type="Rhea" id="RHEA:38331"/>
        <dbReference type="ChEBI" id="CHEBI:17754"/>
        <dbReference type="ChEBI" id="CHEBI:53753"/>
        <dbReference type="ChEBI" id="CHEBI:75342"/>
        <dbReference type="ChEBI" id="CHEBI:75735"/>
    </reaction>
    <physiologicalReaction direction="left-to-right" evidence="1">
        <dbReference type="Rhea" id="RHEA:38332"/>
    </physiologicalReaction>
</comment>
<comment type="catalytic activity">
    <reaction evidence="1">
        <text>1,2,3-tri-(9Z-octadecenoyl)-glycerol + H2O = 1,3-di-(9Z-octadecenoyl)-glycerol + (9Z)-octadecenoate + H(+)</text>
        <dbReference type="Rhea" id="RHEA:38387"/>
        <dbReference type="ChEBI" id="CHEBI:15377"/>
        <dbReference type="ChEBI" id="CHEBI:15378"/>
        <dbReference type="ChEBI" id="CHEBI:30823"/>
        <dbReference type="ChEBI" id="CHEBI:53753"/>
        <dbReference type="ChEBI" id="CHEBI:75735"/>
    </reaction>
    <physiologicalReaction direction="left-to-right" evidence="1">
        <dbReference type="Rhea" id="RHEA:38388"/>
    </physiologicalReaction>
</comment>
<comment type="catalytic activity">
    <reaction evidence="1">
        <text>a 1,2-diacyl-sn-glycero-3-phosphocholine + H2O = a 1-acyl-sn-glycero-3-phosphocholine + a fatty acid + H(+)</text>
        <dbReference type="Rhea" id="RHEA:15801"/>
        <dbReference type="ChEBI" id="CHEBI:15377"/>
        <dbReference type="ChEBI" id="CHEBI:15378"/>
        <dbReference type="ChEBI" id="CHEBI:28868"/>
        <dbReference type="ChEBI" id="CHEBI:57643"/>
        <dbReference type="ChEBI" id="CHEBI:58168"/>
        <dbReference type="EC" id="3.1.1.4"/>
    </reaction>
    <physiologicalReaction direction="left-to-right" evidence="1">
        <dbReference type="Rhea" id="RHEA:15802"/>
    </physiologicalReaction>
</comment>
<comment type="biophysicochemical properties">
    <kinetics>
        <KM evidence="6">12.46 uM for oleoyl-CoA</KM>
        <Vmax evidence="6">3.41 nmol/min/mg enzyme with oleoyl-CoA as acyl donor and 1-oleoyl-sn-glycero-3-phosphate as acyl acceptor</Vmax>
    </kinetics>
</comment>
<comment type="pathway">
    <text evidence="6">Phospholipid metabolism.</text>
</comment>
<comment type="pathway">
    <text evidence="6">Glycerolipid metabolism.</text>
</comment>
<comment type="subcellular location">
    <subcellularLocation>
        <location evidence="5 6">Membrane</location>
        <topology evidence="5">Single-pass membrane protein</topology>
    </subcellularLocation>
    <subcellularLocation>
        <location evidence="6">Lipid droplet</location>
    </subcellularLocation>
</comment>
<comment type="tissue specificity">
    <text evidence="5 6">Restricted to adipose tissue. Expressed in inguinal and epididymal white adipose tissues and in interscapular brown adipose tissue (PubMed:11431482). Also expressed in liver in response to high-sucrose diet (PubMed:22560221).</text>
</comment>
<comment type="induction">
    <text evidence="6">Up-regulated in response to high-sucrose diet.</text>
</comment>
<dbReference type="EC" id="2.3.1.51" evidence="6"/>
<dbReference type="EC" id="3.1.1.4" evidence="1"/>
<dbReference type="EC" id="3.1.1.3" evidence="6"/>
<dbReference type="EMBL" id="AY037763">
    <property type="protein sequence ID" value="AAK68636.1"/>
    <property type="molecule type" value="mRNA"/>
</dbReference>
<dbReference type="EMBL" id="BC028792">
    <property type="protein sequence ID" value="AAH28792.1"/>
    <property type="molecule type" value="mRNA"/>
</dbReference>
<dbReference type="RefSeq" id="NP_473429.2">
    <property type="nucleotide sequence ID" value="NM_054088.3"/>
</dbReference>
<dbReference type="SMR" id="Q91WW7"/>
<dbReference type="FunCoup" id="Q91WW7">
    <property type="interactions" value="119"/>
</dbReference>
<dbReference type="STRING" id="10090.ENSMUSP00000043826"/>
<dbReference type="SwissLipids" id="SLP:000000281"/>
<dbReference type="GlyCosmos" id="Q91WW7">
    <property type="glycosylation" value="2 sites, No reported glycans"/>
</dbReference>
<dbReference type="GlyGen" id="Q91WW7">
    <property type="glycosylation" value="2 sites"/>
</dbReference>
<dbReference type="PhosphoSitePlus" id="Q91WW7"/>
<dbReference type="PaxDb" id="10090-ENSMUSP00000043826"/>
<dbReference type="ProteomicsDB" id="289624"/>
<dbReference type="DNASU" id="116939"/>
<dbReference type="GeneID" id="116939"/>
<dbReference type="KEGG" id="mmu:116939"/>
<dbReference type="UCSC" id="uc007xbw.1">
    <property type="organism name" value="mouse"/>
</dbReference>
<dbReference type="AGR" id="MGI:2151796"/>
<dbReference type="CTD" id="80339"/>
<dbReference type="MGI" id="MGI:2151796">
    <property type="gene designation" value="Pnpla3"/>
</dbReference>
<dbReference type="eggNOG" id="KOG3773">
    <property type="taxonomic scope" value="Eukaryota"/>
</dbReference>
<dbReference type="InParanoid" id="Q91WW7"/>
<dbReference type="OrthoDB" id="197155at2759"/>
<dbReference type="PhylomeDB" id="Q91WW7"/>
<dbReference type="Reactome" id="R-MMU-1482883">
    <property type="pathway name" value="Acyl chain remodeling of DAG and TAG"/>
</dbReference>
<dbReference type="BioGRID-ORCS" id="116939">
    <property type="hits" value="2 hits in 81 CRISPR screens"/>
</dbReference>
<dbReference type="PRO" id="PR:Q91WW7"/>
<dbReference type="Proteomes" id="UP000000589">
    <property type="component" value="Unplaced"/>
</dbReference>
<dbReference type="RNAct" id="Q91WW7">
    <property type="molecule type" value="protein"/>
</dbReference>
<dbReference type="GO" id="GO:0005811">
    <property type="term" value="C:lipid droplet"/>
    <property type="evidence" value="ECO:0000314"/>
    <property type="project" value="BHF-UCL"/>
</dbReference>
<dbReference type="GO" id="GO:0016020">
    <property type="term" value="C:membrane"/>
    <property type="evidence" value="ECO:0000314"/>
    <property type="project" value="BHF-UCL"/>
</dbReference>
<dbReference type="GO" id="GO:0003841">
    <property type="term" value="F:1-acylglycerol-3-phosphate O-acyltransferase activity"/>
    <property type="evidence" value="ECO:0000314"/>
    <property type="project" value="UniProtKB"/>
</dbReference>
<dbReference type="GO" id="GO:0036042">
    <property type="term" value="F:long-chain fatty acyl-CoA binding"/>
    <property type="evidence" value="ECO:0000314"/>
    <property type="project" value="BHF-UCL"/>
</dbReference>
<dbReference type="GO" id="GO:0042171">
    <property type="term" value="F:lysophosphatidic acid acyltransferase activity"/>
    <property type="evidence" value="ECO:0000314"/>
    <property type="project" value="BHF-UCL"/>
</dbReference>
<dbReference type="GO" id="GO:0035727">
    <property type="term" value="F:lysophosphatidic acid binding"/>
    <property type="evidence" value="ECO:0000314"/>
    <property type="project" value="BHF-UCL"/>
</dbReference>
<dbReference type="GO" id="GO:0004623">
    <property type="term" value="F:phospholipase A2 activity"/>
    <property type="evidence" value="ECO:0000250"/>
    <property type="project" value="UniProtKB"/>
</dbReference>
<dbReference type="GO" id="GO:0004806">
    <property type="term" value="F:triacylglycerol lipase activity"/>
    <property type="evidence" value="ECO:0000314"/>
    <property type="project" value="BHF-UCL"/>
</dbReference>
<dbReference type="GO" id="GO:0006650">
    <property type="term" value="P:glycerophospholipid metabolic process"/>
    <property type="evidence" value="ECO:0000314"/>
    <property type="project" value="BHF-UCL"/>
</dbReference>
<dbReference type="GO" id="GO:0001676">
    <property type="term" value="P:long-chain fatty acid metabolic process"/>
    <property type="evidence" value="ECO:0000314"/>
    <property type="project" value="BHF-UCL"/>
</dbReference>
<dbReference type="GO" id="GO:0006654">
    <property type="term" value="P:phosphatidic acid biosynthetic process"/>
    <property type="evidence" value="ECO:0000314"/>
    <property type="project" value="BHF-UCL"/>
</dbReference>
<dbReference type="GO" id="GO:0002021">
    <property type="term" value="P:response to dietary excess"/>
    <property type="evidence" value="ECO:0000315"/>
    <property type="project" value="BHF-UCL"/>
</dbReference>
<dbReference type="GO" id="GO:0019432">
    <property type="term" value="P:triglyceride biosynthetic process"/>
    <property type="evidence" value="ECO:0000314"/>
    <property type="project" value="BHF-UCL"/>
</dbReference>
<dbReference type="GO" id="GO:0019433">
    <property type="term" value="P:triglyceride catabolic process"/>
    <property type="evidence" value="ECO:0000314"/>
    <property type="project" value="BHF-UCL"/>
</dbReference>
<dbReference type="CDD" id="cd07221">
    <property type="entry name" value="Pat_PNPLA3"/>
    <property type="match status" value="1"/>
</dbReference>
<dbReference type="FunFam" id="3.40.1090.10:FF:000042">
    <property type="entry name" value="Patatin-like phospholipase domain-containing 3"/>
    <property type="match status" value="1"/>
</dbReference>
<dbReference type="FunFam" id="3.40.1090.10:FF:000003">
    <property type="entry name" value="Patatin-like phospholipase domain-containing protein 2"/>
    <property type="match status" value="1"/>
</dbReference>
<dbReference type="Gene3D" id="3.40.1090.10">
    <property type="entry name" value="Cytosolic phospholipase A2 catalytic domain"/>
    <property type="match status" value="1"/>
</dbReference>
<dbReference type="InterPro" id="IPR016035">
    <property type="entry name" value="Acyl_Trfase/lysoPLipase"/>
</dbReference>
<dbReference type="InterPro" id="IPR039185">
    <property type="entry name" value="Pat_PNPLA3"/>
</dbReference>
<dbReference type="InterPro" id="IPR033562">
    <property type="entry name" value="PLPL"/>
</dbReference>
<dbReference type="InterPro" id="IPR002641">
    <property type="entry name" value="PNPLA_dom"/>
</dbReference>
<dbReference type="PANTHER" id="PTHR12406:SF22">
    <property type="entry name" value="1-ACYLGLYCEROL-3-PHOSPHATE O-ACYLTRANSFERASE PNPLA3"/>
    <property type="match status" value="1"/>
</dbReference>
<dbReference type="PANTHER" id="PTHR12406">
    <property type="entry name" value="CALCIUM-INDEPENDENT PHOSPHOLIPASE A2 IPLA2 -RELATED"/>
    <property type="match status" value="1"/>
</dbReference>
<dbReference type="Pfam" id="PF01734">
    <property type="entry name" value="Patatin"/>
    <property type="match status" value="1"/>
</dbReference>
<dbReference type="SUPFAM" id="SSF52151">
    <property type="entry name" value="FabD/lysophospholipase-like"/>
    <property type="match status" value="1"/>
</dbReference>
<dbReference type="PROSITE" id="PS51635">
    <property type="entry name" value="PNPLA"/>
    <property type="match status" value="1"/>
</dbReference>
<organism>
    <name type="scientific">Mus musculus</name>
    <name type="common">Mouse</name>
    <dbReference type="NCBI Taxonomy" id="10090"/>
    <lineage>
        <taxon>Eukaryota</taxon>
        <taxon>Metazoa</taxon>
        <taxon>Chordata</taxon>
        <taxon>Craniata</taxon>
        <taxon>Vertebrata</taxon>
        <taxon>Euteleostomi</taxon>
        <taxon>Mammalia</taxon>
        <taxon>Eutheria</taxon>
        <taxon>Euarchontoglires</taxon>
        <taxon>Glires</taxon>
        <taxon>Rodentia</taxon>
        <taxon>Myomorpha</taxon>
        <taxon>Muroidea</taxon>
        <taxon>Muridae</taxon>
        <taxon>Murinae</taxon>
        <taxon>Mus</taxon>
        <taxon>Mus</taxon>
    </lineage>
</organism>
<keyword id="KW-0012">Acyltransferase</keyword>
<keyword id="KW-0325">Glycoprotein</keyword>
<keyword id="KW-0378">Hydrolase</keyword>
<keyword id="KW-0444">Lipid biosynthesis</keyword>
<keyword id="KW-0551">Lipid droplet</keyword>
<keyword id="KW-0443">Lipid metabolism</keyword>
<keyword id="KW-0472">Membrane</keyword>
<keyword id="KW-0594">Phospholipid biosynthesis</keyword>
<keyword id="KW-1208">Phospholipid metabolism</keyword>
<keyword id="KW-1185">Reference proteome</keyword>
<keyword id="KW-0735">Signal-anchor</keyword>
<keyword id="KW-0808">Transferase</keyword>
<keyword id="KW-0812">Transmembrane</keyword>
<keyword id="KW-1133">Transmembrane helix</keyword>